<accession>A0AUS0</accession>
<name>WSDU1_DANRE</name>
<dbReference type="EMBL" id="BC124806">
    <property type="protein sequence ID" value="AAI24807.1"/>
    <property type="molecule type" value="mRNA"/>
</dbReference>
<dbReference type="RefSeq" id="NP_001071237.1">
    <property type="nucleotide sequence ID" value="NM_001077769.1"/>
</dbReference>
<dbReference type="RefSeq" id="XP_017212008.1">
    <property type="nucleotide sequence ID" value="XM_017356519.3"/>
</dbReference>
<dbReference type="SMR" id="A0AUS0"/>
<dbReference type="FunCoup" id="A0AUS0">
    <property type="interactions" value="701"/>
</dbReference>
<dbReference type="STRING" id="7955.ENSDARP00000106094"/>
<dbReference type="PaxDb" id="7955-ENSDARP00000105402"/>
<dbReference type="Ensembl" id="ENSDART00000128024">
    <property type="protein sequence ID" value="ENSDARP00000106094"/>
    <property type="gene ID" value="ENSDARG00000090418"/>
</dbReference>
<dbReference type="GeneID" id="777721"/>
<dbReference type="KEGG" id="dre:777721"/>
<dbReference type="AGR" id="ZFIN:ZDB-GENE-061110-97"/>
<dbReference type="CTD" id="151525"/>
<dbReference type="ZFIN" id="ZDB-GENE-061110-97">
    <property type="gene designation" value="wdsub1"/>
</dbReference>
<dbReference type="eggNOG" id="KOG4155">
    <property type="taxonomic scope" value="Eukaryota"/>
</dbReference>
<dbReference type="InParanoid" id="A0AUS0"/>
<dbReference type="OMA" id="YSEKAHD"/>
<dbReference type="OrthoDB" id="10064100at2759"/>
<dbReference type="PhylomeDB" id="A0AUS0"/>
<dbReference type="PRO" id="PR:A0AUS0"/>
<dbReference type="Proteomes" id="UP000000437">
    <property type="component" value="Chromosome 6"/>
</dbReference>
<dbReference type="Bgee" id="ENSDARG00000090418">
    <property type="expression patterns" value="Expressed in cardiac ventricle and 20 other cell types or tissues"/>
</dbReference>
<dbReference type="ExpressionAtlas" id="A0AUS0">
    <property type="expression patterns" value="baseline and differential"/>
</dbReference>
<dbReference type="GO" id="GO:0004842">
    <property type="term" value="F:ubiquitin-protein transferase activity"/>
    <property type="evidence" value="ECO:0007669"/>
    <property type="project" value="InterPro"/>
</dbReference>
<dbReference type="GO" id="GO:0016567">
    <property type="term" value="P:protein ubiquitination"/>
    <property type="evidence" value="ECO:0007669"/>
    <property type="project" value="InterPro"/>
</dbReference>
<dbReference type="CDD" id="cd16655">
    <property type="entry name" value="RING-Ubox_WDSUB1-like"/>
    <property type="match status" value="1"/>
</dbReference>
<dbReference type="CDD" id="cd09505">
    <property type="entry name" value="SAM_WDSUB1"/>
    <property type="match status" value="1"/>
</dbReference>
<dbReference type="CDD" id="cd00200">
    <property type="entry name" value="WD40"/>
    <property type="match status" value="1"/>
</dbReference>
<dbReference type="Gene3D" id="1.10.150.50">
    <property type="entry name" value="Transcription Factor, Ets-1"/>
    <property type="match status" value="1"/>
</dbReference>
<dbReference type="Gene3D" id="2.130.10.10">
    <property type="entry name" value="YVTN repeat-like/Quinoprotein amine dehydrogenase"/>
    <property type="match status" value="3"/>
</dbReference>
<dbReference type="Gene3D" id="3.30.40.10">
    <property type="entry name" value="Zinc/RING finger domain, C3HC4 (zinc finger)"/>
    <property type="match status" value="1"/>
</dbReference>
<dbReference type="InterPro" id="IPR020472">
    <property type="entry name" value="G-protein_beta_WD-40_rep"/>
</dbReference>
<dbReference type="InterPro" id="IPR001660">
    <property type="entry name" value="SAM"/>
</dbReference>
<dbReference type="InterPro" id="IPR013761">
    <property type="entry name" value="SAM/pointed_sf"/>
</dbReference>
<dbReference type="InterPro" id="IPR003613">
    <property type="entry name" value="Ubox_domain"/>
</dbReference>
<dbReference type="InterPro" id="IPR052085">
    <property type="entry name" value="WD-SAM-U-box"/>
</dbReference>
<dbReference type="InterPro" id="IPR015943">
    <property type="entry name" value="WD40/YVTN_repeat-like_dom_sf"/>
</dbReference>
<dbReference type="InterPro" id="IPR019775">
    <property type="entry name" value="WD40_repeat_CS"/>
</dbReference>
<dbReference type="InterPro" id="IPR036322">
    <property type="entry name" value="WD40_repeat_dom_sf"/>
</dbReference>
<dbReference type="InterPro" id="IPR001680">
    <property type="entry name" value="WD40_rpt"/>
</dbReference>
<dbReference type="InterPro" id="IPR013083">
    <property type="entry name" value="Znf_RING/FYVE/PHD"/>
</dbReference>
<dbReference type="PANTHER" id="PTHR46573">
    <property type="entry name" value="WD REPEAT, SAM AND U-BOX DOMAIN-CONTAINING PROTEIN 1"/>
    <property type="match status" value="1"/>
</dbReference>
<dbReference type="PANTHER" id="PTHR46573:SF1">
    <property type="entry name" value="WD REPEAT, SAM AND U-BOX DOMAIN-CONTAINING PROTEIN 1"/>
    <property type="match status" value="1"/>
</dbReference>
<dbReference type="Pfam" id="PF07647">
    <property type="entry name" value="SAM_2"/>
    <property type="match status" value="1"/>
</dbReference>
<dbReference type="Pfam" id="PF04564">
    <property type="entry name" value="U-box"/>
    <property type="match status" value="1"/>
</dbReference>
<dbReference type="Pfam" id="PF00400">
    <property type="entry name" value="WD40"/>
    <property type="match status" value="6"/>
</dbReference>
<dbReference type="PRINTS" id="PR00320">
    <property type="entry name" value="GPROTEINBRPT"/>
</dbReference>
<dbReference type="SMART" id="SM00454">
    <property type="entry name" value="SAM"/>
    <property type="match status" value="1"/>
</dbReference>
<dbReference type="SMART" id="SM00504">
    <property type="entry name" value="Ubox"/>
    <property type="match status" value="1"/>
</dbReference>
<dbReference type="SMART" id="SM00320">
    <property type="entry name" value="WD40"/>
    <property type="match status" value="7"/>
</dbReference>
<dbReference type="SUPFAM" id="SSF57850">
    <property type="entry name" value="RING/U-box"/>
    <property type="match status" value="1"/>
</dbReference>
<dbReference type="SUPFAM" id="SSF47769">
    <property type="entry name" value="SAM/Pointed domain"/>
    <property type="match status" value="1"/>
</dbReference>
<dbReference type="SUPFAM" id="SSF50978">
    <property type="entry name" value="WD40 repeat-like"/>
    <property type="match status" value="1"/>
</dbReference>
<dbReference type="PROSITE" id="PS50105">
    <property type="entry name" value="SAM_DOMAIN"/>
    <property type="match status" value="1"/>
</dbReference>
<dbReference type="PROSITE" id="PS51698">
    <property type="entry name" value="U_BOX"/>
    <property type="match status" value="1"/>
</dbReference>
<dbReference type="PROSITE" id="PS00678">
    <property type="entry name" value="WD_REPEATS_1"/>
    <property type="match status" value="1"/>
</dbReference>
<dbReference type="PROSITE" id="PS50082">
    <property type="entry name" value="WD_REPEATS_2"/>
    <property type="match status" value="6"/>
</dbReference>
<dbReference type="PROSITE" id="PS50294">
    <property type="entry name" value="WD_REPEATS_REGION"/>
    <property type="match status" value="1"/>
</dbReference>
<gene>
    <name type="primary">wdsub1</name>
    <name type="ORF">zgc:154085</name>
</gene>
<protein>
    <recommendedName>
        <fullName>WD repeat, SAM and U-box domain-containing protein 1</fullName>
    </recommendedName>
</protein>
<feature type="chain" id="PRO_0000278612" description="WD repeat, SAM and U-box domain-containing protein 1">
    <location>
        <begin position="1"/>
        <end position="487"/>
    </location>
</feature>
<feature type="repeat" description="WD 1">
    <location>
        <begin position="10"/>
        <end position="47"/>
    </location>
</feature>
<feature type="repeat" description="WD 2">
    <location>
        <begin position="52"/>
        <end position="93"/>
    </location>
</feature>
<feature type="repeat" description="WD 3">
    <location>
        <begin position="95"/>
        <end position="134"/>
    </location>
</feature>
<feature type="repeat" description="WD 4">
    <location>
        <begin position="137"/>
        <end position="176"/>
    </location>
</feature>
<feature type="repeat" description="WD 5">
    <location>
        <begin position="179"/>
        <end position="227"/>
    </location>
</feature>
<feature type="repeat" description="WD 6">
    <location>
        <begin position="237"/>
        <end position="276"/>
    </location>
</feature>
<feature type="repeat" description="WD 7">
    <location>
        <begin position="279"/>
        <end position="318"/>
    </location>
</feature>
<feature type="domain" description="SAM" evidence="1">
    <location>
        <begin position="347"/>
        <end position="411"/>
    </location>
</feature>
<feature type="domain" description="U-box">
    <location>
        <begin position="416"/>
        <end position="487"/>
    </location>
</feature>
<proteinExistence type="evidence at transcript level"/>
<reference key="1">
    <citation type="submission" date="2006-10" db="EMBL/GenBank/DDBJ databases">
        <authorList>
            <consortium name="NIH - Zebrafish Gene Collection (ZGC) project"/>
        </authorList>
    </citation>
    <scope>NUCLEOTIDE SEQUENCE [LARGE SCALE MRNA]</scope>
    <source>
        <tissue>Ovary</tissue>
    </source>
</reference>
<sequence>MVSLICTLQSHRDDVNCVAFSGDLLATCSADKSICVYSSRDFSELPFSPLSGHGYGVHCCCFSACGQYLASCSTDATTMVWSMDTGEIEAVLEHPGRSPVRVCAFSPDSSHLVSGGSDGSIALWDFTSRTLRRTGVVNDTSIVACSFTPCGQMFITGSTYGDLRLWDLNMNHLHAEKNAHDLGVSCAQFAPKMMKGTDGCVQFRLASCGQDSLLKIWIVSLLPSAGIKMQLAHTLTGQSAPVLSCAYSPDGQMLVSGSVDKTVTVYQADEGVLLYTLHQHDRYVTACAFSPTAPLIATGSMDKSVNIWRMEEGSSAQGKSLPDEKAAFSNTEGRKACGHSRLMVSEWSEEEVLAWLREEGLEAVTDAFKSNNIDGEELLSLSKETLSSDLHIESLGLRSKVMKKIEELKMVPVYNGTPDEFLCPITREIMKDPVIAADGYSYEREAIEAWISTKNRTSPMTNLPLQTTLLTPNRTLKMAIFRWSTSQ</sequence>
<evidence type="ECO:0000255" key="1">
    <source>
        <dbReference type="PROSITE-ProRule" id="PRU00184"/>
    </source>
</evidence>
<keyword id="KW-1185">Reference proteome</keyword>
<keyword id="KW-0677">Repeat</keyword>
<keyword id="KW-0853">WD repeat</keyword>
<organism>
    <name type="scientific">Danio rerio</name>
    <name type="common">Zebrafish</name>
    <name type="synonym">Brachydanio rerio</name>
    <dbReference type="NCBI Taxonomy" id="7955"/>
    <lineage>
        <taxon>Eukaryota</taxon>
        <taxon>Metazoa</taxon>
        <taxon>Chordata</taxon>
        <taxon>Craniata</taxon>
        <taxon>Vertebrata</taxon>
        <taxon>Euteleostomi</taxon>
        <taxon>Actinopterygii</taxon>
        <taxon>Neopterygii</taxon>
        <taxon>Teleostei</taxon>
        <taxon>Ostariophysi</taxon>
        <taxon>Cypriniformes</taxon>
        <taxon>Danionidae</taxon>
        <taxon>Danioninae</taxon>
        <taxon>Danio</taxon>
    </lineage>
</organism>